<comment type="function">
    <text evidence="1">Guanine nucleotide exchange factor (GEF) for RAB14. Component of an endocytic recycling pathway that is required for the control of ADAM10 transport, shedding of N-cadherin/CDH2 by ADAM9 or ADAM10 and regulation of cell-cell junctions. Required for RAB14 recruitment to recycling endosomes (By similarity).</text>
</comment>
<comment type="subcellular location">
    <subcellularLocation>
        <location evidence="1">Recycling endosome</location>
    </subcellularLocation>
    <subcellularLocation>
        <location evidence="1">Cytoplasm</location>
    </subcellularLocation>
</comment>
<comment type="alternative products">
    <event type="alternative splicing"/>
    <isoform>
        <id>Q8BH65-1</id>
        <name>1</name>
        <sequence type="displayed"/>
    </isoform>
    <isoform>
        <id>Q8BH65-2</id>
        <name>2</name>
        <sequence type="described" ref="VSP_025920 VSP_025921"/>
    </isoform>
    <isoform>
        <id>Q8BH65-3</id>
        <name>3</name>
        <sequence type="described" ref="VSP_025918"/>
    </isoform>
    <isoform>
        <id>Q8BH65-4</id>
        <name>4</name>
        <sequence type="described" ref="VSP_025918 VSP_025919"/>
    </isoform>
</comment>
<comment type="similarity">
    <text evidence="7">Belongs to the DENND6 family.</text>
</comment>
<comment type="caution">
    <text evidence="7">Identified as having similarity to the core DENN family and referred to as DENN6A. Prediction methods do not indicate a DENN domain for this sequence and, the exact role of the DENN or the DENN-like domain in GEF activity needs to be clarified.</text>
</comment>
<comment type="sequence caution" evidence="7">
    <conflict type="erroneous initiation">
        <sequence resource="EMBL-CDS" id="BAD21413"/>
    </conflict>
    <text>Extended N-terminus.</text>
</comment>
<reference key="1">
    <citation type="journal article" date="2004" name="DNA Res.">
        <title>Prediction of the coding sequences of mouse homologues of FLJ genes: the complete nucleotide sequences of 110 mouse FLJ-homologous cDNAs identified by screening of terminal sequences of cDNA clones randomly sampled from size-fractionated libraries.</title>
        <authorList>
            <person name="Okazaki N."/>
            <person name="Kikuno R."/>
            <person name="Ohara R."/>
            <person name="Inamoto S."/>
            <person name="Koseki H."/>
            <person name="Hiraoka S."/>
            <person name="Saga Y."/>
            <person name="Kitamura H."/>
            <person name="Nakagawa T."/>
            <person name="Nagase T."/>
            <person name="Ohara O."/>
            <person name="Koga H."/>
        </authorList>
    </citation>
    <scope>NUCLEOTIDE SEQUENCE [LARGE SCALE MRNA] (ISOFORM 1)</scope>
    <source>
        <strain>ICR</strain>
        <tissue>Embryonic tail</tissue>
    </source>
</reference>
<reference key="2">
    <citation type="journal article" date="2005" name="Science">
        <title>The transcriptional landscape of the mammalian genome.</title>
        <authorList>
            <person name="Carninci P."/>
            <person name="Kasukawa T."/>
            <person name="Katayama S."/>
            <person name="Gough J."/>
            <person name="Frith M.C."/>
            <person name="Maeda N."/>
            <person name="Oyama R."/>
            <person name="Ravasi T."/>
            <person name="Lenhard B."/>
            <person name="Wells C."/>
            <person name="Kodzius R."/>
            <person name="Shimokawa K."/>
            <person name="Bajic V.B."/>
            <person name="Brenner S.E."/>
            <person name="Batalov S."/>
            <person name="Forrest A.R."/>
            <person name="Zavolan M."/>
            <person name="Davis M.J."/>
            <person name="Wilming L.G."/>
            <person name="Aidinis V."/>
            <person name="Allen J.E."/>
            <person name="Ambesi-Impiombato A."/>
            <person name="Apweiler R."/>
            <person name="Aturaliya R.N."/>
            <person name="Bailey T.L."/>
            <person name="Bansal M."/>
            <person name="Baxter L."/>
            <person name="Beisel K.W."/>
            <person name="Bersano T."/>
            <person name="Bono H."/>
            <person name="Chalk A.M."/>
            <person name="Chiu K.P."/>
            <person name="Choudhary V."/>
            <person name="Christoffels A."/>
            <person name="Clutterbuck D.R."/>
            <person name="Crowe M.L."/>
            <person name="Dalla E."/>
            <person name="Dalrymple B.P."/>
            <person name="de Bono B."/>
            <person name="Della Gatta G."/>
            <person name="di Bernardo D."/>
            <person name="Down T."/>
            <person name="Engstrom P."/>
            <person name="Fagiolini M."/>
            <person name="Faulkner G."/>
            <person name="Fletcher C.F."/>
            <person name="Fukushima T."/>
            <person name="Furuno M."/>
            <person name="Futaki S."/>
            <person name="Gariboldi M."/>
            <person name="Georgii-Hemming P."/>
            <person name="Gingeras T.R."/>
            <person name="Gojobori T."/>
            <person name="Green R.E."/>
            <person name="Gustincich S."/>
            <person name="Harbers M."/>
            <person name="Hayashi Y."/>
            <person name="Hensch T.K."/>
            <person name="Hirokawa N."/>
            <person name="Hill D."/>
            <person name="Huminiecki L."/>
            <person name="Iacono M."/>
            <person name="Ikeo K."/>
            <person name="Iwama A."/>
            <person name="Ishikawa T."/>
            <person name="Jakt M."/>
            <person name="Kanapin A."/>
            <person name="Katoh M."/>
            <person name="Kawasawa Y."/>
            <person name="Kelso J."/>
            <person name="Kitamura H."/>
            <person name="Kitano H."/>
            <person name="Kollias G."/>
            <person name="Krishnan S.P."/>
            <person name="Kruger A."/>
            <person name="Kummerfeld S.K."/>
            <person name="Kurochkin I.V."/>
            <person name="Lareau L.F."/>
            <person name="Lazarevic D."/>
            <person name="Lipovich L."/>
            <person name="Liu J."/>
            <person name="Liuni S."/>
            <person name="McWilliam S."/>
            <person name="Madan Babu M."/>
            <person name="Madera M."/>
            <person name="Marchionni L."/>
            <person name="Matsuda H."/>
            <person name="Matsuzawa S."/>
            <person name="Miki H."/>
            <person name="Mignone F."/>
            <person name="Miyake S."/>
            <person name="Morris K."/>
            <person name="Mottagui-Tabar S."/>
            <person name="Mulder N."/>
            <person name="Nakano N."/>
            <person name="Nakauchi H."/>
            <person name="Ng P."/>
            <person name="Nilsson R."/>
            <person name="Nishiguchi S."/>
            <person name="Nishikawa S."/>
            <person name="Nori F."/>
            <person name="Ohara O."/>
            <person name="Okazaki Y."/>
            <person name="Orlando V."/>
            <person name="Pang K.C."/>
            <person name="Pavan W.J."/>
            <person name="Pavesi G."/>
            <person name="Pesole G."/>
            <person name="Petrovsky N."/>
            <person name="Piazza S."/>
            <person name="Reed J."/>
            <person name="Reid J.F."/>
            <person name="Ring B.Z."/>
            <person name="Ringwald M."/>
            <person name="Rost B."/>
            <person name="Ruan Y."/>
            <person name="Salzberg S.L."/>
            <person name="Sandelin A."/>
            <person name="Schneider C."/>
            <person name="Schoenbach C."/>
            <person name="Sekiguchi K."/>
            <person name="Semple C.A."/>
            <person name="Seno S."/>
            <person name="Sessa L."/>
            <person name="Sheng Y."/>
            <person name="Shibata Y."/>
            <person name="Shimada H."/>
            <person name="Shimada K."/>
            <person name="Silva D."/>
            <person name="Sinclair B."/>
            <person name="Sperling S."/>
            <person name="Stupka E."/>
            <person name="Sugiura K."/>
            <person name="Sultana R."/>
            <person name="Takenaka Y."/>
            <person name="Taki K."/>
            <person name="Tammoja K."/>
            <person name="Tan S.L."/>
            <person name="Tang S."/>
            <person name="Taylor M.S."/>
            <person name="Tegner J."/>
            <person name="Teichmann S.A."/>
            <person name="Ueda H.R."/>
            <person name="van Nimwegen E."/>
            <person name="Verardo R."/>
            <person name="Wei C.L."/>
            <person name="Yagi K."/>
            <person name="Yamanishi H."/>
            <person name="Zabarovsky E."/>
            <person name="Zhu S."/>
            <person name="Zimmer A."/>
            <person name="Hide W."/>
            <person name="Bult C."/>
            <person name="Grimmond S.M."/>
            <person name="Teasdale R.D."/>
            <person name="Liu E.T."/>
            <person name="Brusic V."/>
            <person name="Quackenbush J."/>
            <person name="Wahlestedt C."/>
            <person name="Mattick J.S."/>
            <person name="Hume D.A."/>
            <person name="Kai C."/>
            <person name="Sasaki D."/>
            <person name="Tomaru Y."/>
            <person name="Fukuda S."/>
            <person name="Kanamori-Katayama M."/>
            <person name="Suzuki M."/>
            <person name="Aoki J."/>
            <person name="Arakawa T."/>
            <person name="Iida J."/>
            <person name="Imamura K."/>
            <person name="Itoh M."/>
            <person name="Kato T."/>
            <person name="Kawaji H."/>
            <person name="Kawagashira N."/>
            <person name="Kawashima T."/>
            <person name="Kojima M."/>
            <person name="Kondo S."/>
            <person name="Konno H."/>
            <person name="Nakano K."/>
            <person name="Ninomiya N."/>
            <person name="Nishio T."/>
            <person name="Okada M."/>
            <person name="Plessy C."/>
            <person name="Shibata K."/>
            <person name="Shiraki T."/>
            <person name="Suzuki S."/>
            <person name="Tagami M."/>
            <person name="Waki K."/>
            <person name="Watahiki A."/>
            <person name="Okamura-Oho Y."/>
            <person name="Suzuki H."/>
            <person name="Kawai J."/>
            <person name="Hayashizaki Y."/>
        </authorList>
    </citation>
    <scope>NUCLEOTIDE SEQUENCE [LARGE SCALE MRNA] (ISOFORMS 1; 3 AND 4)</scope>
    <source>
        <strain>C57BL/6J</strain>
        <tissue>Brain</tissue>
        <tissue>Egg</tissue>
        <tissue>Ovary</tissue>
        <tissue>Oviduct</tissue>
        <tissue>Thymus</tissue>
    </source>
</reference>
<reference key="3">
    <citation type="journal article" date="2004" name="Genome Res.">
        <title>The status, quality, and expansion of the NIH full-length cDNA project: the Mammalian Gene Collection (MGC).</title>
        <authorList>
            <consortium name="The MGC Project Team"/>
        </authorList>
    </citation>
    <scope>NUCLEOTIDE SEQUENCE [LARGE SCALE MRNA] (ISOFORM 2)</scope>
    <scope>NUCLEOTIDE SEQUENCE [LARGE SCALE MRNA] OF 419-605 (ISOFORM 1)</scope>
    <source>
        <strain>FVB/N</strain>
        <tissue>Mammary tumor</tissue>
    </source>
</reference>
<reference key="4">
    <citation type="journal article" date="2011" name="J. Biol. Chem.">
        <title>DENN domain proteins: regulators of Rab GTPases.</title>
        <authorList>
            <person name="Marat A.L."/>
            <person name="Dokainish H."/>
            <person name="McPherson P.S."/>
        </authorList>
    </citation>
    <scope>IDENTIFICATION</scope>
</reference>
<reference key="5">
    <citation type="journal article" date="2010" name="Cell">
        <title>A tissue-specific atlas of mouse protein phosphorylation and expression.</title>
        <authorList>
            <person name="Huttlin E.L."/>
            <person name="Jedrychowski M.P."/>
            <person name="Elias J.E."/>
            <person name="Goswami T."/>
            <person name="Rad R."/>
            <person name="Beausoleil S.A."/>
            <person name="Villen J."/>
            <person name="Haas W."/>
            <person name="Sowa M.E."/>
            <person name="Gygi S.P."/>
        </authorList>
    </citation>
    <scope>PHOSPHORYLATION [LARGE SCALE ANALYSIS] AT SER-124</scope>
    <scope>IDENTIFICATION BY MASS SPECTROMETRY [LARGE SCALE ANALYSIS]</scope>
    <source>
        <tissue>Kidney</tissue>
        <tissue>Lung</tissue>
    </source>
</reference>
<name>DEN6A_MOUSE</name>
<organism>
    <name type="scientific">Mus musculus</name>
    <name type="common">Mouse</name>
    <dbReference type="NCBI Taxonomy" id="10090"/>
    <lineage>
        <taxon>Eukaryota</taxon>
        <taxon>Metazoa</taxon>
        <taxon>Chordata</taxon>
        <taxon>Craniata</taxon>
        <taxon>Vertebrata</taxon>
        <taxon>Euteleostomi</taxon>
        <taxon>Mammalia</taxon>
        <taxon>Eutheria</taxon>
        <taxon>Euarchontoglires</taxon>
        <taxon>Glires</taxon>
        <taxon>Rodentia</taxon>
        <taxon>Myomorpha</taxon>
        <taxon>Muroidea</taxon>
        <taxon>Muridae</taxon>
        <taxon>Murinae</taxon>
        <taxon>Mus</taxon>
        <taxon>Mus</taxon>
    </lineage>
</organism>
<keyword id="KW-0025">Alternative splicing</keyword>
<keyword id="KW-0963">Cytoplasm</keyword>
<keyword id="KW-0967">Endosome</keyword>
<keyword id="KW-0344">Guanine-nucleotide releasing factor</keyword>
<keyword id="KW-0488">Methylation</keyword>
<keyword id="KW-0597">Phosphoprotein</keyword>
<keyword id="KW-1185">Reference proteome</keyword>
<accession>Q8BH65</accession>
<accession>Q3UX21</accession>
<accession>Q6KAP4</accession>
<accession>Q8BSG0</accession>
<accession>Q8C4Z7</accession>
<accession>Q8K2E8</accession>
<accession>Q8R136</accession>
<gene>
    <name type="primary">Dennd6a</name>
</gene>
<feature type="chain" id="PRO_0000289117" description="Protein DENND6A">
    <location>
        <begin position="1"/>
        <end position="605"/>
    </location>
</feature>
<feature type="domain" description="uDENN" evidence="3">
    <location>
        <begin position="60"/>
        <end position="239"/>
    </location>
</feature>
<feature type="domain" description="cDENN" evidence="3">
    <location>
        <begin position="265"/>
        <end position="390"/>
    </location>
</feature>
<feature type="domain" description="dDENN" evidence="3">
    <location>
        <begin position="392"/>
        <end position="525"/>
    </location>
</feature>
<feature type="region of interest" description="Disordered" evidence="4">
    <location>
        <begin position="1"/>
        <end position="20"/>
    </location>
</feature>
<feature type="modified residue" description="Phosphoserine" evidence="8">
    <location>
        <position position="124"/>
    </location>
</feature>
<feature type="modified residue" description="N6-methyllysine" evidence="2">
    <location>
        <position position="507"/>
    </location>
</feature>
<feature type="splice variant" id="VSP_025918" description="In isoform 3 and isoform 4." evidence="6">
    <location>
        <begin position="1"/>
        <end position="224"/>
    </location>
</feature>
<feature type="splice variant" id="VSP_025919" description="In isoform 4." evidence="6">
    <location>
        <begin position="424"/>
        <end position="605"/>
    </location>
</feature>
<feature type="splice variant" id="VSP_025920" description="In isoform 2." evidence="5">
    <original>DLLLWIQKHTEVETVDLVLKLK</original>
    <variation>VRKKCISTCKCSEYKSILRGLE</variation>
    <location>
        <begin position="538"/>
        <end position="559"/>
    </location>
</feature>
<feature type="splice variant" id="VSP_025921" description="In isoform 2." evidence="5">
    <location>
        <begin position="560"/>
        <end position="605"/>
    </location>
</feature>
<evidence type="ECO:0000250" key="1"/>
<evidence type="ECO:0000250" key="2">
    <source>
        <dbReference type="UniProtKB" id="Q8IWF6"/>
    </source>
</evidence>
<evidence type="ECO:0000255" key="3">
    <source>
        <dbReference type="PROSITE-ProRule" id="PRU00304"/>
    </source>
</evidence>
<evidence type="ECO:0000256" key="4">
    <source>
        <dbReference type="SAM" id="MobiDB-lite"/>
    </source>
</evidence>
<evidence type="ECO:0000303" key="5">
    <source>
    </source>
</evidence>
<evidence type="ECO:0000303" key="6">
    <source>
    </source>
</evidence>
<evidence type="ECO:0000305" key="7"/>
<evidence type="ECO:0007744" key="8">
    <source>
    </source>
</evidence>
<proteinExistence type="evidence at protein level"/>
<dbReference type="EMBL" id="AK131163">
    <property type="protein sequence ID" value="BAD21413.1"/>
    <property type="status" value="ALT_INIT"/>
    <property type="molecule type" value="mRNA"/>
</dbReference>
<dbReference type="EMBL" id="AK033036">
    <property type="protein sequence ID" value="BAC28133.1"/>
    <property type="molecule type" value="mRNA"/>
</dbReference>
<dbReference type="EMBL" id="AK054197">
    <property type="protein sequence ID" value="BAC35690.1"/>
    <property type="molecule type" value="mRNA"/>
</dbReference>
<dbReference type="EMBL" id="AK054295">
    <property type="protein sequence ID" value="BAC35721.1"/>
    <property type="molecule type" value="mRNA"/>
</dbReference>
<dbReference type="EMBL" id="AK080327">
    <property type="protein sequence ID" value="BAC37879.1"/>
    <property type="molecule type" value="mRNA"/>
</dbReference>
<dbReference type="EMBL" id="AK132219">
    <property type="protein sequence ID" value="BAE21040.1"/>
    <property type="molecule type" value="mRNA"/>
</dbReference>
<dbReference type="EMBL" id="AK135953">
    <property type="protein sequence ID" value="BAE22742.1"/>
    <property type="molecule type" value="mRNA"/>
</dbReference>
<dbReference type="EMBL" id="AK163396">
    <property type="protein sequence ID" value="BAE37333.1"/>
    <property type="molecule type" value="mRNA"/>
</dbReference>
<dbReference type="EMBL" id="BC025603">
    <property type="protein sequence ID" value="AAH25603.1"/>
    <property type="molecule type" value="mRNA"/>
</dbReference>
<dbReference type="EMBL" id="BC031553">
    <property type="protein sequence ID" value="AAH31553.1"/>
    <property type="molecule type" value="mRNA"/>
</dbReference>
<dbReference type="CCDS" id="CCDS49430.1">
    <molecule id="Q8BH65-1"/>
</dbReference>
<dbReference type="CCDS" id="CCDS84101.1">
    <molecule id="Q8BH65-2"/>
</dbReference>
<dbReference type="CCDS" id="CCDS88601.1">
    <molecule id="Q8BH65-3"/>
</dbReference>
<dbReference type="RefSeq" id="NP_001127937.1">
    <molecule id="Q8BH65-1"/>
    <property type="nucleotide sequence ID" value="NM_001134465.2"/>
</dbReference>
<dbReference type="RefSeq" id="NP_001272395.1">
    <molecule id="Q8BH65-3"/>
    <property type="nucleotide sequence ID" value="NM_001285466.1"/>
</dbReference>
<dbReference type="RefSeq" id="NP_001272396.1">
    <molecule id="Q8BH65-3"/>
    <property type="nucleotide sequence ID" value="NM_001285467.1"/>
</dbReference>
<dbReference type="RefSeq" id="NP_666081.1">
    <molecule id="Q8BH65-2"/>
    <property type="nucleotide sequence ID" value="NM_145969.4"/>
</dbReference>
<dbReference type="RefSeq" id="XP_006518841.1">
    <molecule id="Q8BH65-3"/>
    <property type="nucleotide sequence ID" value="XM_006518778.1"/>
</dbReference>
<dbReference type="RefSeq" id="XP_006518842.1">
    <property type="nucleotide sequence ID" value="XM_006518779.1"/>
</dbReference>
<dbReference type="RefSeq" id="XP_036014426.1">
    <molecule id="Q8BH65-3"/>
    <property type="nucleotide sequence ID" value="XM_036158533.1"/>
</dbReference>
<dbReference type="BioGRID" id="229272">
    <property type="interactions" value="27"/>
</dbReference>
<dbReference type="FunCoup" id="Q8BH65">
    <property type="interactions" value="5746"/>
</dbReference>
<dbReference type="IntAct" id="Q8BH65">
    <property type="interactions" value="26"/>
</dbReference>
<dbReference type="STRING" id="10090.ENSMUSP00000039361"/>
<dbReference type="iPTMnet" id="Q8BH65"/>
<dbReference type="PhosphoSitePlus" id="Q8BH65"/>
<dbReference type="jPOST" id="Q8BH65"/>
<dbReference type="PaxDb" id="10090-ENSMUSP00000039361"/>
<dbReference type="PeptideAtlas" id="Q8BH65"/>
<dbReference type="ProteomicsDB" id="279195">
    <molecule id="Q8BH65-1"/>
</dbReference>
<dbReference type="ProteomicsDB" id="279196">
    <molecule id="Q8BH65-2"/>
</dbReference>
<dbReference type="ProteomicsDB" id="279197">
    <molecule id="Q8BH65-3"/>
</dbReference>
<dbReference type="ProteomicsDB" id="279198">
    <molecule id="Q8BH65-4"/>
</dbReference>
<dbReference type="Pumba" id="Q8BH65"/>
<dbReference type="Antibodypedia" id="31568">
    <property type="antibodies" value="46 antibodies from 14 providers"/>
</dbReference>
<dbReference type="DNASU" id="211922"/>
<dbReference type="Ensembl" id="ENSMUST00000037585.9">
    <molecule id="Q8BH65-1"/>
    <property type="protein sequence ID" value="ENSMUSP00000039361.8"/>
    <property type="gene ID" value="ENSMUSG00000040818.11"/>
</dbReference>
<dbReference type="Ensembl" id="ENSMUST00000203874.3">
    <molecule id="Q8BH65-2"/>
    <property type="protein sequence ID" value="ENSMUSP00000144906.2"/>
    <property type="gene ID" value="ENSMUSG00000040818.11"/>
</dbReference>
<dbReference type="Ensembl" id="ENSMUST00000224111.2">
    <molecule id="Q8BH65-3"/>
    <property type="protein sequence ID" value="ENSMUSP00000153187.2"/>
    <property type="gene ID" value="ENSMUSG00000040818.11"/>
</dbReference>
<dbReference type="Ensembl" id="ENSMUST00000224248.2">
    <molecule id="Q8BH65-3"/>
    <property type="protein sequence ID" value="ENSMUSP00000152966.2"/>
    <property type="gene ID" value="ENSMUSG00000040818.11"/>
</dbReference>
<dbReference type="GeneID" id="211922"/>
<dbReference type="KEGG" id="mmu:211922"/>
<dbReference type="UCSC" id="uc007ssv.1">
    <molecule id="Q8BH65-3"/>
    <property type="organism name" value="mouse"/>
</dbReference>
<dbReference type="UCSC" id="uc007ssw.3">
    <molecule id="Q8BH65-1"/>
    <property type="organism name" value="mouse"/>
</dbReference>
<dbReference type="UCSC" id="uc007ssx.2">
    <molecule id="Q8BH65-2"/>
    <property type="organism name" value="mouse"/>
</dbReference>
<dbReference type="AGR" id="MGI:2442980"/>
<dbReference type="CTD" id="201627"/>
<dbReference type="MGI" id="MGI:2442980">
    <property type="gene designation" value="Dennd6a"/>
</dbReference>
<dbReference type="VEuPathDB" id="HostDB:ENSMUSG00000040818"/>
<dbReference type="eggNOG" id="KOG2432">
    <property type="taxonomic scope" value="Eukaryota"/>
</dbReference>
<dbReference type="GeneTree" id="ENSGT00390000005529"/>
<dbReference type="HOGENOM" id="CLU_017013_0_1_1"/>
<dbReference type="InParanoid" id="Q8BH65"/>
<dbReference type="OMA" id="EANLEHW"/>
<dbReference type="OrthoDB" id="10265409at2759"/>
<dbReference type="PhylomeDB" id="Q8BH65"/>
<dbReference type="TreeFam" id="TF320228"/>
<dbReference type="Reactome" id="R-MMU-8876198">
    <property type="pathway name" value="RAB GEFs exchange GTP for GDP on RABs"/>
</dbReference>
<dbReference type="BioGRID-ORCS" id="211922">
    <property type="hits" value="4 hits in 76 CRISPR screens"/>
</dbReference>
<dbReference type="ChiTaRS" id="Dennd6a">
    <property type="organism name" value="mouse"/>
</dbReference>
<dbReference type="PRO" id="PR:Q8BH65"/>
<dbReference type="Proteomes" id="UP000000589">
    <property type="component" value="Chromosome 14"/>
</dbReference>
<dbReference type="RNAct" id="Q8BH65">
    <property type="molecule type" value="protein"/>
</dbReference>
<dbReference type="Bgee" id="ENSMUSG00000040818">
    <property type="expression patterns" value="Expressed in animal zygote and 66 other cell types or tissues"/>
</dbReference>
<dbReference type="ExpressionAtlas" id="Q8BH65">
    <property type="expression patterns" value="baseline and differential"/>
</dbReference>
<dbReference type="GO" id="GO:0005737">
    <property type="term" value="C:cytoplasm"/>
    <property type="evidence" value="ECO:0000250"/>
    <property type="project" value="UniProtKB"/>
</dbReference>
<dbReference type="GO" id="GO:0055037">
    <property type="term" value="C:recycling endosome"/>
    <property type="evidence" value="ECO:0000250"/>
    <property type="project" value="UniProtKB"/>
</dbReference>
<dbReference type="GO" id="GO:0005085">
    <property type="term" value="F:guanyl-nucleotide exchange factor activity"/>
    <property type="evidence" value="ECO:0000250"/>
    <property type="project" value="UniProtKB"/>
</dbReference>
<dbReference type="GO" id="GO:2000049">
    <property type="term" value="P:positive regulation of cell-cell adhesion mediated by cadherin"/>
    <property type="evidence" value="ECO:0000250"/>
    <property type="project" value="UniProtKB"/>
</dbReference>
<dbReference type="InterPro" id="IPR018307">
    <property type="entry name" value="ABL9/DENND6_dom"/>
</dbReference>
<dbReference type="InterPro" id="IPR024224">
    <property type="entry name" value="DENND6"/>
</dbReference>
<dbReference type="InterPro" id="IPR037516">
    <property type="entry name" value="Tripartite_DENN"/>
</dbReference>
<dbReference type="PANTHER" id="PTHR13677">
    <property type="entry name" value="LD41638P"/>
    <property type="match status" value="1"/>
</dbReference>
<dbReference type="PANTHER" id="PTHR13677:SF1">
    <property type="entry name" value="PROTEIN DENND6A"/>
    <property type="match status" value="1"/>
</dbReference>
<dbReference type="Pfam" id="PF09794">
    <property type="entry name" value="Avl9"/>
    <property type="match status" value="1"/>
</dbReference>
<dbReference type="PROSITE" id="PS50211">
    <property type="entry name" value="DENN"/>
    <property type="match status" value="1"/>
</dbReference>
<protein>
    <recommendedName>
        <fullName>Protein DENND6A</fullName>
    </recommendedName>
    <alternativeName>
        <fullName>DENN domain-containing protein 6A</fullName>
    </alternativeName>
</protein>
<sequence length="605" mass="68967">MALPGPAVFGPGSRGSLDEAGAEGREAAALAAAGVALEDEEEDDGRRGLLRWDGFSAWLHCVCVVGFDLELGQAVEVIYPQHSKLTDKEKTNICYLSFPDSNSGCLGDTQFCFRFRQSSGRRVSLHCLLDEFDKDLPVYLKKDPAYFYGYVYFRQVRDKTLKRGYFQKSLVLISKLPYIHFFHTVLKQIAPEYFEKNEPYLEAACNDVDRWPAPVPGKTLHLPIMGLVMKVRIPTCHDKPGTTQMVQLTQQADTHTSIILPTVHEVDLFRCFCPVFLHSQMLWELVLLGEPLVVMAPSPSESSETVLALVNCISPLKYFSDFRPYFTIHDSEFKEYTTRTQAPPSVILGVTNPFFAKTLQHWPHIIRIGDLKPAGEIPKQVKVKKLKNLKTLDSKPGVYTSYKPYLNRDEEIIKQLQKGIQQKRPSEAQSVILRRYFLELTQSFIIPLERYVASLMPLQKSISPWKSPPQLRQFLPEEFMKTLEKTGPQLTSGIKGDWIGLYRQFLKSPNFDGWFKTRRKEMTQKLEALHLEALCEEDLLLWIQKHTEVETVDLVLKLKNKLLQAGRESLPVKPDTVEKLRTHIDAIILALPDDLQGILLKTGMT</sequence>